<gene>
    <name evidence="1" type="primary">thiG</name>
    <name type="ordered locus">CC_1880</name>
</gene>
<keyword id="KW-0963">Cytoplasm</keyword>
<keyword id="KW-1185">Reference proteome</keyword>
<keyword id="KW-0704">Schiff base</keyword>
<keyword id="KW-0784">Thiamine biosynthesis</keyword>
<keyword id="KW-0808">Transferase</keyword>
<dbReference type="EC" id="2.8.1.10" evidence="1"/>
<dbReference type="EMBL" id="AE005673">
    <property type="protein sequence ID" value="AAK23855.1"/>
    <property type="molecule type" value="Genomic_DNA"/>
</dbReference>
<dbReference type="PIR" id="C87482">
    <property type="entry name" value="C87482"/>
</dbReference>
<dbReference type="RefSeq" id="NP_420687.1">
    <property type="nucleotide sequence ID" value="NC_002696.2"/>
</dbReference>
<dbReference type="RefSeq" id="WP_010919746.1">
    <property type="nucleotide sequence ID" value="NC_002696.2"/>
</dbReference>
<dbReference type="SMR" id="Q9A746"/>
<dbReference type="STRING" id="190650.CC_1880"/>
<dbReference type="EnsemblBacteria" id="AAK23855">
    <property type="protein sequence ID" value="AAK23855"/>
    <property type="gene ID" value="CC_1880"/>
</dbReference>
<dbReference type="KEGG" id="ccr:CC_1880"/>
<dbReference type="PATRIC" id="fig|190650.5.peg.1897"/>
<dbReference type="eggNOG" id="COG2022">
    <property type="taxonomic scope" value="Bacteria"/>
</dbReference>
<dbReference type="HOGENOM" id="CLU_062233_1_0_5"/>
<dbReference type="BioCyc" id="CAULO:CC1880-MONOMER"/>
<dbReference type="UniPathway" id="UPA00060"/>
<dbReference type="Proteomes" id="UP000001816">
    <property type="component" value="Chromosome"/>
</dbReference>
<dbReference type="GO" id="GO:0005737">
    <property type="term" value="C:cytoplasm"/>
    <property type="evidence" value="ECO:0007669"/>
    <property type="project" value="UniProtKB-SubCell"/>
</dbReference>
<dbReference type="GO" id="GO:1990107">
    <property type="term" value="F:thiazole synthase activity"/>
    <property type="evidence" value="ECO:0007669"/>
    <property type="project" value="UniProtKB-EC"/>
</dbReference>
<dbReference type="GO" id="GO:0009229">
    <property type="term" value="P:thiamine diphosphate biosynthetic process"/>
    <property type="evidence" value="ECO:0007669"/>
    <property type="project" value="UniProtKB-UniRule"/>
</dbReference>
<dbReference type="CDD" id="cd04728">
    <property type="entry name" value="ThiG"/>
    <property type="match status" value="1"/>
</dbReference>
<dbReference type="Gene3D" id="3.20.20.70">
    <property type="entry name" value="Aldolase class I"/>
    <property type="match status" value="1"/>
</dbReference>
<dbReference type="HAMAP" id="MF_00443">
    <property type="entry name" value="ThiG"/>
    <property type="match status" value="1"/>
</dbReference>
<dbReference type="InterPro" id="IPR013785">
    <property type="entry name" value="Aldolase_TIM"/>
</dbReference>
<dbReference type="InterPro" id="IPR033983">
    <property type="entry name" value="Thiazole_synthase_ThiG"/>
</dbReference>
<dbReference type="InterPro" id="IPR008867">
    <property type="entry name" value="ThiG"/>
</dbReference>
<dbReference type="PANTHER" id="PTHR34266">
    <property type="entry name" value="THIAZOLE SYNTHASE"/>
    <property type="match status" value="1"/>
</dbReference>
<dbReference type="PANTHER" id="PTHR34266:SF2">
    <property type="entry name" value="THIAZOLE SYNTHASE"/>
    <property type="match status" value="1"/>
</dbReference>
<dbReference type="Pfam" id="PF05690">
    <property type="entry name" value="ThiG"/>
    <property type="match status" value="1"/>
</dbReference>
<dbReference type="SUPFAM" id="SSF110399">
    <property type="entry name" value="ThiG-like"/>
    <property type="match status" value="1"/>
</dbReference>
<evidence type="ECO:0000255" key="1">
    <source>
        <dbReference type="HAMAP-Rule" id="MF_00443"/>
    </source>
</evidence>
<comment type="function">
    <text evidence="1">Catalyzes the rearrangement of 1-deoxy-D-xylulose 5-phosphate (DXP) to produce the thiazole phosphate moiety of thiamine. Sulfur is provided by the thiocarboxylate moiety of the carrier protein ThiS. In vitro, sulfur can be provided by H(2)S.</text>
</comment>
<comment type="catalytic activity">
    <reaction evidence="1">
        <text>[ThiS sulfur-carrier protein]-C-terminal-Gly-aminoethanethioate + 2-iminoacetate + 1-deoxy-D-xylulose 5-phosphate = [ThiS sulfur-carrier protein]-C-terminal Gly-Gly + 2-[(2R,5Z)-2-carboxy-4-methylthiazol-5(2H)-ylidene]ethyl phosphate + 2 H2O + H(+)</text>
        <dbReference type="Rhea" id="RHEA:26297"/>
        <dbReference type="Rhea" id="RHEA-COMP:12909"/>
        <dbReference type="Rhea" id="RHEA-COMP:19908"/>
        <dbReference type="ChEBI" id="CHEBI:15377"/>
        <dbReference type="ChEBI" id="CHEBI:15378"/>
        <dbReference type="ChEBI" id="CHEBI:57792"/>
        <dbReference type="ChEBI" id="CHEBI:62899"/>
        <dbReference type="ChEBI" id="CHEBI:77846"/>
        <dbReference type="ChEBI" id="CHEBI:90778"/>
        <dbReference type="ChEBI" id="CHEBI:232372"/>
        <dbReference type="EC" id="2.8.1.10"/>
    </reaction>
</comment>
<comment type="pathway">
    <text evidence="1">Cofactor biosynthesis; thiamine diphosphate biosynthesis.</text>
</comment>
<comment type="subunit">
    <text evidence="1">Homotetramer. Forms heterodimers with either ThiH or ThiS.</text>
</comment>
<comment type="subcellular location">
    <subcellularLocation>
        <location evidence="1">Cytoplasm</location>
    </subcellularLocation>
</comment>
<comment type="similarity">
    <text evidence="1">Belongs to the ThiG family.</text>
</comment>
<proteinExistence type="inferred from homology"/>
<sequence>MNAHVTPDSVTADSDETWTVAGRTFRSRLIVGTGKYKDYATNAAAARAAGAEIVTVAVRRVNLTDPSQPLLVDYVKPTEFTYLPNTAGCFTGEDAVRTLRLAREAGGWDLVKLEVLSDPKTLFPDMEETLRSLKLLVADGFQVMVYCSDDPVYARKLEEAGAVAIMPLGAPIGSGLGIQNRVNLRIIIENAKVPVLVDAGVGTASDAAIGMELGCDAILMNTAIAEAKDPIRMAKAMKHAVIAGREAYLAGRMQKRLYADPSSPLAGLI</sequence>
<reference key="1">
    <citation type="journal article" date="2001" name="Proc. Natl. Acad. Sci. U.S.A.">
        <title>Complete genome sequence of Caulobacter crescentus.</title>
        <authorList>
            <person name="Nierman W.C."/>
            <person name="Feldblyum T.V."/>
            <person name="Laub M.T."/>
            <person name="Paulsen I.T."/>
            <person name="Nelson K.E."/>
            <person name="Eisen J.A."/>
            <person name="Heidelberg J.F."/>
            <person name="Alley M.R.K."/>
            <person name="Ohta N."/>
            <person name="Maddock J.R."/>
            <person name="Potocka I."/>
            <person name="Nelson W.C."/>
            <person name="Newton A."/>
            <person name="Stephens C."/>
            <person name="Phadke N.D."/>
            <person name="Ely B."/>
            <person name="DeBoy R.T."/>
            <person name="Dodson R.J."/>
            <person name="Durkin A.S."/>
            <person name="Gwinn M.L."/>
            <person name="Haft D.H."/>
            <person name="Kolonay J.F."/>
            <person name="Smit J."/>
            <person name="Craven M.B."/>
            <person name="Khouri H.M."/>
            <person name="Shetty J."/>
            <person name="Berry K.J."/>
            <person name="Utterback T.R."/>
            <person name="Tran K."/>
            <person name="Wolf A.M."/>
            <person name="Vamathevan J.J."/>
            <person name="Ermolaeva M.D."/>
            <person name="White O."/>
            <person name="Salzberg S.L."/>
            <person name="Venter J.C."/>
            <person name="Shapiro L."/>
            <person name="Fraser C.M."/>
        </authorList>
    </citation>
    <scope>NUCLEOTIDE SEQUENCE [LARGE SCALE GENOMIC DNA]</scope>
    <source>
        <strain>ATCC 19089 / CIP 103742 / CB 15</strain>
    </source>
</reference>
<accession>Q9A746</accession>
<feature type="chain" id="PRO_0000162803" description="Thiazole synthase">
    <location>
        <begin position="1"/>
        <end position="269"/>
    </location>
</feature>
<feature type="active site" description="Schiff-base intermediate with DXP" evidence="1">
    <location>
        <position position="112"/>
    </location>
</feature>
<feature type="binding site" evidence="1">
    <location>
        <position position="173"/>
    </location>
    <ligand>
        <name>1-deoxy-D-xylulose 5-phosphate</name>
        <dbReference type="ChEBI" id="CHEBI:57792"/>
    </ligand>
</feature>
<feature type="binding site" evidence="1">
    <location>
        <begin position="199"/>
        <end position="200"/>
    </location>
    <ligand>
        <name>1-deoxy-D-xylulose 5-phosphate</name>
        <dbReference type="ChEBI" id="CHEBI:57792"/>
    </ligand>
</feature>
<feature type="binding site" evidence="1">
    <location>
        <begin position="221"/>
        <end position="222"/>
    </location>
    <ligand>
        <name>1-deoxy-D-xylulose 5-phosphate</name>
        <dbReference type="ChEBI" id="CHEBI:57792"/>
    </ligand>
</feature>
<protein>
    <recommendedName>
        <fullName evidence="1">Thiazole synthase</fullName>
        <ecNumber evidence="1">2.8.1.10</ecNumber>
    </recommendedName>
</protein>
<organism>
    <name type="scientific">Caulobacter vibrioides (strain ATCC 19089 / CIP 103742 / CB 15)</name>
    <name type="common">Caulobacter crescentus</name>
    <dbReference type="NCBI Taxonomy" id="190650"/>
    <lineage>
        <taxon>Bacteria</taxon>
        <taxon>Pseudomonadati</taxon>
        <taxon>Pseudomonadota</taxon>
        <taxon>Alphaproteobacteria</taxon>
        <taxon>Caulobacterales</taxon>
        <taxon>Caulobacteraceae</taxon>
        <taxon>Caulobacter</taxon>
    </lineage>
</organism>
<name>THIG_CAUVC</name>